<evidence type="ECO:0000250" key="1"/>
<evidence type="ECO:0000255" key="2">
    <source>
        <dbReference type="PROSITE-ProRule" id="PRU00237"/>
    </source>
</evidence>
<evidence type="ECO:0000305" key="3"/>
<comment type="function">
    <text evidence="1">Controls the development of red pulp macrophages required for red blood cells recycling and iron homeostasis. Transcription factor that binds to the PU-box, a purine-rich DNA sequence (5'-GAGGA[AT]-3') that can act as a lymphoid-specific enhancer. Regulates VCAM1 gene expression (By similarity).</text>
</comment>
<comment type="subunit">
    <text evidence="1">Binds DNA as a monomer.</text>
</comment>
<comment type="subcellular location">
    <subcellularLocation>
        <location evidence="3">Nucleus</location>
    </subcellularLocation>
</comment>
<comment type="similarity">
    <text evidence="3">Belongs to the ETS family.</text>
</comment>
<keyword id="KW-0238">DNA-binding</keyword>
<keyword id="KW-0539">Nucleus</keyword>
<keyword id="KW-1185">Reference proteome</keyword>
<keyword id="KW-0804">Transcription</keyword>
<keyword id="KW-0805">Transcription regulation</keyword>
<accession>Q1RML4</accession>
<name>SPIC_BOVIN</name>
<protein>
    <recommendedName>
        <fullName>Transcription factor Spi-C</fullName>
    </recommendedName>
</protein>
<feature type="chain" id="PRO_0000287136" description="Transcription factor Spi-C">
    <location>
        <begin position="1"/>
        <end position="248"/>
    </location>
</feature>
<feature type="DNA-binding region" description="ETS" evidence="2">
    <location>
        <begin position="111"/>
        <end position="194"/>
    </location>
</feature>
<gene>
    <name type="primary">SPIC</name>
</gene>
<dbReference type="EMBL" id="BC114834">
    <property type="protein sequence ID" value="AAI14835.1"/>
    <property type="molecule type" value="mRNA"/>
</dbReference>
<dbReference type="RefSeq" id="NP_001069889.1">
    <property type="nucleotide sequence ID" value="NM_001076421.1"/>
</dbReference>
<dbReference type="RefSeq" id="XP_005206760.1">
    <property type="nucleotide sequence ID" value="XM_005206703.3"/>
</dbReference>
<dbReference type="SMR" id="Q1RML4"/>
<dbReference type="FunCoup" id="Q1RML4">
    <property type="interactions" value="93"/>
</dbReference>
<dbReference type="STRING" id="9913.ENSBTAP00000013069"/>
<dbReference type="PaxDb" id="9913-ENSBTAP00000013069"/>
<dbReference type="Ensembl" id="ENSBTAT00000070386.2">
    <property type="protein sequence ID" value="ENSBTAP00000068421.1"/>
    <property type="gene ID" value="ENSBTAG00000009904.7"/>
</dbReference>
<dbReference type="GeneID" id="616438"/>
<dbReference type="KEGG" id="bta:616438"/>
<dbReference type="CTD" id="121599"/>
<dbReference type="VEuPathDB" id="HostDB:ENSBTAG00000009904"/>
<dbReference type="VGNC" id="VGNC:35214">
    <property type="gene designation" value="SPIC"/>
</dbReference>
<dbReference type="eggNOG" id="KOG3805">
    <property type="taxonomic scope" value="Eukaryota"/>
</dbReference>
<dbReference type="GeneTree" id="ENSGT00940000155067"/>
<dbReference type="HOGENOM" id="CLU_098156_0_0_1"/>
<dbReference type="InParanoid" id="Q1RML4"/>
<dbReference type="OMA" id="YSWRNVI"/>
<dbReference type="OrthoDB" id="10043646at2759"/>
<dbReference type="Proteomes" id="UP000009136">
    <property type="component" value="Chromosome 5"/>
</dbReference>
<dbReference type="Bgee" id="ENSBTAG00000009904">
    <property type="expression patterns" value="Expressed in spleen and 53 other cell types or tissues"/>
</dbReference>
<dbReference type="GO" id="GO:0005634">
    <property type="term" value="C:nucleus"/>
    <property type="evidence" value="ECO:0000318"/>
    <property type="project" value="GO_Central"/>
</dbReference>
<dbReference type="GO" id="GO:0000981">
    <property type="term" value="F:DNA-binding transcription factor activity, RNA polymerase II-specific"/>
    <property type="evidence" value="ECO:0000318"/>
    <property type="project" value="GO_Central"/>
</dbReference>
<dbReference type="GO" id="GO:0043565">
    <property type="term" value="F:sequence-specific DNA binding"/>
    <property type="evidence" value="ECO:0007669"/>
    <property type="project" value="InterPro"/>
</dbReference>
<dbReference type="GO" id="GO:0030154">
    <property type="term" value="P:cell differentiation"/>
    <property type="evidence" value="ECO:0000318"/>
    <property type="project" value="GO_Central"/>
</dbReference>
<dbReference type="GO" id="GO:0006357">
    <property type="term" value="P:regulation of transcription by RNA polymerase II"/>
    <property type="evidence" value="ECO:0000318"/>
    <property type="project" value="GO_Central"/>
</dbReference>
<dbReference type="FunFam" id="1.10.10.10:FF:000335">
    <property type="entry name" value="Spi-C transcription factor"/>
    <property type="match status" value="1"/>
</dbReference>
<dbReference type="Gene3D" id="1.10.10.10">
    <property type="entry name" value="Winged helix-like DNA-binding domain superfamily/Winged helix DNA-binding domain"/>
    <property type="match status" value="1"/>
</dbReference>
<dbReference type="InterPro" id="IPR000418">
    <property type="entry name" value="Ets_dom"/>
</dbReference>
<dbReference type="InterPro" id="IPR046328">
    <property type="entry name" value="ETS_fam"/>
</dbReference>
<dbReference type="InterPro" id="IPR036388">
    <property type="entry name" value="WH-like_DNA-bd_sf"/>
</dbReference>
<dbReference type="InterPro" id="IPR036390">
    <property type="entry name" value="WH_DNA-bd_sf"/>
</dbReference>
<dbReference type="PANTHER" id="PTHR11849">
    <property type="entry name" value="ETS"/>
    <property type="match status" value="1"/>
</dbReference>
<dbReference type="PANTHER" id="PTHR11849:SF17">
    <property type="entry name" value="TRANSCRIPTION FACTOR SPI-C"/>
    <property type="match status" value="1"/>
</dbReference>
<dbReference type="Pfam" id="PF00178">
    <property type="entry name" value="Ets"/>
    <property type="match status" value="1"/>
</dbReference>
<dbReference type="PRINTS" id="PR00454">
    <property type="entry name" value="ETSDOMAIN"/>
</dbReference>
<dbReference type="SMART" id="SM00413">
    <property type="entry name" value="ETS"/>
    <property type="match status" value="1"/>
</dbReference>
<dbReference type="SUPFAM" id="SSF46785">
    <property type="entry name" value="Winged helix' DNA-binding domain"/>
    <property type="match status" value="1"/>
</dbReference>
<dbReference type="PROSITE" id="PS00346">
    <property type="entry name" value="ETS_DOMAIN_2"/>
    <property type="match status" value="1"/>
</dbReference>
<dbReference type="PROSITE" id="PS50061">
    <property type="entry name" value="ETS_DOMAIN_3"/>
    <property type="match status" value="1"/>
</dbReference>
<proteinExistence type="evidence at transcript level"/>
<organism>
    <name type="scientific">Bos taurus</name>
    <name type="common">Bovine</name>
    <dbReference type="NCBI Taxonomy" id="9913"/>
    <lineage>
        <taxon>Eukaryota</taxon>
        <taxon>Metazoa</taxon>
        <taxon>Chordata</taxon>
        <taxon>Craniata</taxon>
        <taxon>Vertebrata</taxon>
        <taxon>Euteleostomi</taxon>
        <taxon>Mammalia</taxon>
        <taxon>Eutheria</taxon>
        <taxon>Laurasiatheria</taxon>
        <taxon>Artiodactyla</taxon>
        <taxon>Ruminantia</taxon>
        <taxon>Pecora</taxon>
        <taxon>Bovidae</taxon>
        <taxon>Bovinae</taxon>
        <taxon>Bos</taxon>
    </lineage>
</organism>
<reference key="1">
    <citation type="submission" date="2006-04" db="EMBL/GenBank/DDBJ databases">
        <authorList>
            <consortium name="NIH - Mammalian Gene Collection (MGC) project"/>
        </authorList>
    </citation>
    <scope>NUCLEOTIDE SEQUENCE [LARGE SCALE MRNA]</scope>
    <source>
        <strain>Hereford</strain>
        <tissue>Thymus</tissue>
    </source>
</reference>
<sequence length="248" mass="29112">MACAEQDKLGQAFEDAFEVLRQHSTGDFQYSSDYKNYLAFINHRSHIRGNSNSYGVQPAEEPIYNWRTVINSATDLYFEGNIHQSLQNIPENQLVQPALLQQKGGKGRKKLRLFEYLHESLCNPEMASCIQWIDQTKGIFQFVSKNKEKLAQLWGKRKGNRKTMTYQKMARALRNYGRTGEIIKIRRKLTYQFSEAILQRLSAPYFLEKEIFYSQYVQPDQGYLSLNNWNANYNYTYANYHELSHPDC</sequence>